<organism>
    <name type="scientific">Escherichia coli O7:K1 (strain IAI39 / ExPEC)</name>
    <dbReference type="NCBI Taxonomy" id="585057"/>
    <lineage>
        <taxon>Bacteria</taxon>
        <taxon>Pseudomonadati</taxon>
        <taxon>Pseudomonadota</taxon>
        <taxon>Gammaproteobacteria</taxon>
        <taxon>Enterobacterales</taxon>
        <taxon>Enterobacteriaceae</taxon>
        <taxon>Escherichia</taxon>
    </lineage>
</organism>
<sequence>MQRVTITLDDDLLETLDSLSQRRGYNNRSEAIRDILRSALAQEATQQHGTQGFAVLSYVYEHEKRDLASRIVSTQHHHHDLSVATLHVHINHDDCLEIAVLKGDMGDVQHFADDVIAQRGVRHGHLQCLPKED</sequence>
<dbReference type="EMBL" id="CU928164">
    <property type="protein sequence ID" value="CAR20074.1"/>
    <property type="molecule type" value="Genomic_DNA"/>
</dbReference>
<dbReference type="RefSeq" id="WP_001190062.1">
    <property type="nucleotide sequence ID" value="NC_011750.1"/>
</dbReference>
<dbReference type="RefSeq" id="YP_002409855.1">
    <property type="nucleotide sequence ID" value="NC_011750.1"/>
</dbReference>
<dbReference type="SMR" id="B7NN95"/>
<dbReference type="STRING" id="585057.ECIAI39_3962"/>
<dbReference type="GeneID" id="93778510"/>
<dbReference type="KEGG" id="ect:ECIAI39_3962"/>
<dbReference type="PATRIC" id="fig|585057.6.peg.4104"/>
<dbReference type="HOGENOM" id="CLU_113319_1_4_6"/>
<dbReference type="Proteomes" id="UP000000749">
    <property type="component" value="Chromosome"/>
</dbReference>
<dbReference type="GO" id="GO:0003700">
    <property type="term" value="F:DNA-binding transcription factor activity"/>
    <property type="evidence" value="ECO:0007669"/>
    <property type="project" value="UniProtKB-UniRule"/>
</dbReference>
<dbReference type="GO" id="GO:0016151">
    <property type="term" value="F:nickel cation binding"/>
    <property type="evidence" value="ECO:0007669"/>
    <property type="project" value="UniProtKB-UniRule"/>
</dbReference>
<dbReference type="GO" id="GO:0043565">
    <property type="term" value="F:sequence-specific DNA binding"/>
    <property type="evidence" value="ECO:0007669"/>
    <property type="project" value="UniProtKB-ARBA"/>
</dbReference>
<dbReference type="GO" id="GO:0010045">
    <property type="term" value="P:response to nickel cation"/>
    <property type="evidence" value="ECO:0007669"/>
    <property type="project" value="InterPro"/>
</dbReference>
<dbReference type="CDD" id="cd22231">
    <property type="entry name" value="RHH_NikR_HicB-like"/>
    <property type="match status" value="1"/>
</dbReference>
<dbReference type="FunFam" id="1.10.1220.10:FF:000001">
    <property type="entry name" value="Nickel-responsive regulator"/>
    <property type="match status" value="1"/>
</dbReference>
<dbReference type="FunFam" id="3.30.70.1150:FF:000002">
    <property type="entry name" value="Nickel-responsive regulator"/>
    <property type="match status" value="1"/>
</dbReference>
<dbReference type="Gene3D" id="3.30.70.1150">
    <property type="entry name" value="ACT-like. Chain A, domain 2"/>
    <property type="match status" value="1"/>
</dbReference>
<dbReference type="Gene3D" id="1.10.1220.10">
    <property type="entry name" value="Met repressor-like"/>
    <property type="match status" value="1"/>
</dbReference>
<dbReference type="HAMAP" id="MF_00476">
    <property type="entry name" value="NikR"/>
    <property type="match status" value="1"/>
</dbReference>
<dbReference type="InterPro" id="IPR027271">
    <property type="entry name" value="Acetolactate_synth/TF_NikR_C"/>
</dbReference>
<dbReference type="InterPro" id="IPR045865">
    <property type="entry name" value="ACT-like_dom_sf"/>
</dbReference>
<dbReference type="InterPro" id="IPR013321">
    <property type="entry name" value="Arc_rbn_hlx_hlx"/>
</dbReference>
<dbReference type="InterPro" id="IPR002145">
    <property type="entry name" value="CopG"/>
</dbReference>
<dbReference type="InterPro" id="IPR050192">
    <property type="entry name" value="CopG/NikR_regulator"/>
</dbReference>
<dbReference type="InterPro" id="IPR022988">
    <property type="entry name" value="Ni_resp_reg_NikR"/>
</dbReference>
<dbReference type="InterPro" id="IPR014160">
    <property type="entry name" value="Nickel_NikR_proteobac"/>
</dbReference>
<dbReference type="InterPro" id="IPR010985">
    <property type="entry name" value="Ribbon_hlx_hlx"/>
</dbReference>
<dbReference type="InterPro" id="IPR014864">
    <property type="entry name" value="TF_NikR_Ni-bd_C"/>
</dbReference>
<dbReference type="NCBIfam" id="TIGR02793">
    <property type="entry name" value="nikR"/>
    <property type="match status" value="1"/>
</dbReference>
<dbReference type="NCBIfam" id="NF002815">
    <property type="entry name" value="PRK02967.1"/>
    <property type="match status" value="1"/>
</dbReference>
<dbReference type="NCBIfam" id="NF003381">
    <property type="entry name" value="PRK04460.1"/>
    <property type="match status" value="1"/>
</dbReference>
<dbReference type="PANTHER" id="PTHR34719">
    <property type="entry name" value="NICKEL-RESPONSIVE REGULATOR"/>
    <property type="match status" value="1"/>
</dbReference>
<dbReference type="PANTHER" id="PTHR34719:SF2">
    <property type="entry name" value="NICKEL-RESPONSIVE REGULATOR"/>
    <property type="match status" value="1"/>
</dbReference>
<dbReference type="Pfam" id="PF08753">
    <property type="entry name" value="NikR_C"/>
    <property type="match status" value="1"/>
</dbReference>
<dbReference type="Pfam" id="PF01402">
    <property type="entry name" value="RHH_1"/>
    <property type="match status" value="1"/>
</dbReference>
<dbReference type="SUPFAM" id="SSF55021">
    <property type="entry name" value="ACT-like"/>
    <property type="match status" value="1"/>
</dbReference>
<dbReference type="SUPFAM" id="SSF47598">
    <property type="entry name" value="Ribbon-helix-helix"/>
    <property type="match status" value="1"/>
</dbReference>
<protein>
    <recommendedName>
        <fullName evidence="1">Nickel-responsive regulator</fullName>
    </recommendedName>
</protein>
<gene>
    <name evidence="1" type="primary">nikR</name>
    <name type="ordered locus">ECIAI39_3962</name>
</gene>
<accession>B7NN95</accession>
<keyword id="KW-0238">DNA-binding</keyword>
<keyword id="KW-0479">Metal-binding</keyword>
<keyword id="KW-0533">Nickel</keyword>
<keyword id="KW-0678">Repressor</keyword>
<keyword id="KW-0804">Transcription</keyword>
<keyword id="KW-0805">Transcription regulation</keyword>
<reference key="1">
    <citation type="journal article" date="2009" name="PLoS Genet.">
        <title>Organised genome dynamics in the Escherichia coli species results in highly diverse adaptive paths.</title>
        <authorList>
            <person name="Touchon M."/>
            <person name="Hoede C."/>
            <person name="Tenaillon O."/>
            <person name="Barbe V."/>
            <person name="Baeriswyl S."/>
            <person name="Bidet P."/>
            <person name="Bingen E."/>
            <person name="Bonacorsi S."/>
            <person name="Bouchier C."/>
            <person name="Bouvet O."/>
            <person name="Calteau A."/>
            <person name="Chiapello H."/>
            <person name="Clermont O."/>
            <person name="Cruveiller S."/>
            <person name="Danchin A."/>
            <person name="Diard M."/>
            <person name="Dossat C."/>
            <person name="Karoui M.E."/>
            <person name="Frapy E."/>
            <person name="Garry L."/>
            <person name="Ghigo J.M."/>
            <person name="Gilles A.M."/>
            <person name="Johnson J."/>
            <person name="Le Bouguenec C."/>
            <person name="Lescat M."/>
            <person name="Mangenot S."/>
            <person name="Martinez-Jehanne V."/>
            <person name="Matic I."/>
            <person name="Nassif X."/>
            <person name="Oztas S."/>
            <person name="Petit M.A."/>
            <person name="Pichon C."/>
            <person name="Rouy Z."/>
            <person name="Ruf C.S."/>
            <person name="Schneider D."/>
            <person name="Tourret J."/>
            <person name="Vacherie B."/>
            <person name="Vallenet D."/>
            <person name="Medigue C."/>
            <person name="Rocha E.P.C."/>
            <person name="Denamur E."/>
        </authorList>
    </citation>
    <scope>NUCLEOTIDE SEQUENCE [LARGE SCALE GENOMIC DNA]</scope>
    <source>
        <strain>IAI39 / ExPEC</strain>
    </source>
</reference>
<evidence type="ECO:0000255" key="1">
    <source>
        <dbReference type="HAMAP-Rule" id="MF_00476"/>
    </source>
</evidence>
<feature type="chain" id="PRO_1000125818" description="Nickel-responsive regulator">
    <location>
        <begin position="1"/>
        <end position="133"/>
    </location>
</feature>
<feature type="binding site" evidence="1">
    <location>
        <position position="76"/>
    </location>
    <ligand>
        <name>Ni(2+)</name>
        <dbReference type="ChEBI" id="CHEBI:49786"/>
    </ligand>
</feature>
<feature type="binding site" evidence="1">
    <location>
        <position position="87"/>
    </location>
    <ligand>
        <name>Ni(2+)</name>
        <dbReference type="ChEBI" id="CHEBI:49786"/>
    </ligand>
</feature>
<feature type="binding site" evidence="1">
    <location>
        <position position="89"/>
    </location>
    <ligand>
        <name>Ni(2+)</name>
        <dbReference type="ChEBI" id="CHEBI:49786"/>
    </ligand>
</feature>
<feature type="binding site" evidence="1">
    <location>
        <position position="95"/>
    </location>
    <ligand>
        <name>Ni(2+)</name>
        <dbReference type="ChEBI" id="CHEBI:49786"/>
    </ligand>
</feature>
<comment type="function">
    <text evidence="1">Transcriptional repressor of the nikABCDE operon. Is active in the presence of excessive concentrations of intracellular nickel.</text>
</comment>
<comment type="cofactor">
    <cofactor evidence="1">
        <name>Ni(2+)</name>
        <dbReference type="ChEBI" id="CHEBI:49786"/>
    </cofactor>
    <text evidence="1">Binds 1 nickel ion per subunit.</text>
</comment>
<comment type="subunit">
    <text evidence="1">Homotetramer.</text>
</comment>
<comment type="similarity">
    <text evidence="1">Belongs to the transcriptional regulatory CopG/NikR family.</text>
</comment>
<proteinExistence type="inferred from homology"/>
<name>NIKR_ECO7I</name>